<reference key="1">
    <citation type="submission" date="2005-08" db="EMBL/GenBank/DDBJ databases">
        <title>Complete sequence of chromosome 1 of Nitrosospira multiformis ATCC 25196.</title>
        <authorList>
            <person name="Copeland A."/>
            <person name="Lucas S."/>
            <person name="Lapidus A."/>
            <person name="Barry K."/>
            <person name="Detter J.C."/>
            <person name="Glavina T."/>
            <person name="Hammon N."/>
            <person name="Israni S."/>
            <person name="Pitluck S."/>
            <person name="Chain P."/>
            <person name="Malfatti S."/>
            <person name="Shin M."/>
            <person name="Vergez L."/>
            <person name="Schmutz J."/>
            <person name="Larimer F."/>
            <person name="Land M."/>
            <person name="Hauser L."/>
            <person name="Kyrpides N."/>
            <person name="Lykidis A."/>
            <person name="Richardson P."/>
        </authorList>
    </citation>
    <scope>NUCLEOTIDE SEQUENCE [LARGE SCALE GENOMIC DNA]</scope>
    <source>
        <strain>ATCC 25196 / NCIMB 11849 / C 71</strain>
    </source>
</reference>
<comment type="function">
    <text evidence="1">Nucleotidase that shows phosphatase activity on nucleoside 5'-monophosphates.</text>
</comment>
<comment type="catalytic activity">
    <reaction evidence="1">
        <text>a ribonucleoside 5'-phosphate + H2O = a ribonucleoside + phosphate</text>
        <dbReference type="Rhea" id="RHEA:12484"/>
        <dbReference type="ChEBI" id="CHEBI:15377"/>
        <dbReference type="ChEBI" id="CHEBI:18254"/>
        <dbReference type="ChEBI" id="CHEBI:43474"/>
        <dbReference type="ChEBI" id="CHEBI:58043"/>
        <dbReference type="EC" id="3.1.3.5"/>
    </reaction>
</comment>
<comment type="cofactor">
    <cofactor evidence="1">
        <name>a divalent metal cation</name>
        <dbReference type="ChEBI" id="CHEBI:60240"/>
    </cofactor>
    <text evidence="1">Binds 1 divalent metal cation per subunit.</text>
</comment>
<comment type="subcellular location">
    <subcellularLocation>
        <location evidence="1">Cytoplasm</location>
    </subcellularLocation>
</comment>
<comment type="similarity">
    <text evidence="1">Belongs to the SurE nucleotidase family.</text>
</comment>
<gene>
    <name evidence="1" type="primary">surE</name>
    <name type="ordered locus">Nmul_A0495</name>
</gene>
<proteinExistence type="inferred from homology"/>
<dbReference type="EC" id="3.1.3.5" evidence="1"/>
<dbReference type="EMBL" id="CP000103">
    <property type="protein sequence ID" value="ABB73803.1"/>
    <property type="molecule type" value="Genomic_DNA"/>
</dbReference>
<dbReference type="RefSeq" id="WP_011379857.1">
    <property type="nucleotide sequence ID" value="NC_007614.1"/>
</dbReference>
<dbReference type="SMR" id="Q2YBR8"/>
<dbReference type="STRING" id="323848.Nmul_A0495"/>
<dbReference type="KEGG" id="nmu:Nmul_A0495"/>
<dbReference type="eggNOG" id="COG0496">
    <property type="taxonomic scope" value="Bacteria"/>
</dbReference>
<dbReference type="HOGENOM" id="CLU_045192_1_2_4"/>
<dbReference type="OrthoDB" id="9780815at2"/>
<dbReference type="Proteomes" id="UP000002718">
    <property type="component" value="Chromosome"/>
</dbReference>
<dbReference type="GO" id="GO:0005737">
    <property type="term" value="C:cytoplasm"/>
    <property type="evidence" value="ECO:0007669"/>
    <property type="project" value="UniProtKB-SubCell"/>
</dbReference>
<dbReference type="GO" id="GO:0008254">
    <property type="term" value="F:3'-nucleotidase activity"/>
    <property type="evidence" value="ECO:0007669"/>
    <property type="project" value="TreeGrafter"/>
</dbReference>
<dbReference type="GO" id="GO:0008253">
    <property type="term" value="F:5'-nucleotidase activity"/>
    <property type="evidence" value="ECO:0007669"/>
    <property type="project" value="UniProtKB-UniRule"/>
</dbReference>
<dbReference type="GO" id="GO:0004309">
    <property type="term" value="F:exopolyphosphatase activity"/>
    <property type="evidence" value="ECO:0007669"/>
    <property type="project" value="TreeGrafter"/>
</dbReference>
<dbReference type="GO" id="GO:0046872">
    <property type="term" value="F:metal ion binding"/>
    <property type="evidence" value="ECO:0007669"/>
    <property type="project" value="UniProtKB-UniRule"/>
</dbReference>
<dbReference type="GO" id="GO:0000166">
    <property type="term" value="F:nucleotide binding"/>
    <property type="evidence" value="ECO:0007669"/>
    <property type="project" value="UniProtKB-KW"/>
</dbReference>
<dbReference type="FunFam" id="3.40.1210.10:FF:000001">
    <property type="entry name" value="5'/3'-nucleotidase SurE"/>
    <property type="match status" value="1"/>
</dbReference>
<dbReference type="Gene3D" id="3.40.1210.10">
    <property type="entry name" value="Survival protein SurE-like phosphatase/nucleotidase"/>
    <property type="match status" value="1"/>
</dbReference>
<dbReference type="HAMAP" id="MF_00060">
    <property type="entry name" value="SurE"/>
    <property type="match status" value="1"/>
</dbReference>
<dbReference type="InterPro" id="IPR030048">
    <property type="entry name" value="SurE"/>
</dbReference>
<dbReference type="InterPro" id="IPR002828">
    <property type="entry name" value="SurE-like_Pase/nucleotidase"/>
</dbReference>
<dbReference type="InterPro" id="IPR036523">
    <property type="entry name" value="SurE-like_sf"/>
</dbReference>
<dbReference type="NCBIfam" id="NF001489">
    <property type="entry name" value="PRK00346.1-3"/>
    <property type="match status" value="1"/>
</dbReference>
<dbReference type="NCBIfam" id="NF001490">
    <property type="entry name" value="PRK00346.1-4"/>
    <property type="match status" value="1"/>
</dbReference>
<dbReference type="NCBIfam" id="TIGR00087">
    <property type="entry name" value="surE"/>
    <property type="match status" value="1"/>
</dbReference>
<dbReference type="PANTHER" id="PTHR30457">
    <property type="entry name" value="5'-NUCLEOTIDASE SURE"/>
    <property type="match status" value="1"/>
</dbReference>
<dbReference type="PANTHER" id="PTHR30457:SF12">
    <property type="entry name" value="5'_3'-NUCLEOTIDASE SURE"/>
    <property type="match status" value="1"/>
</dbReference>
<dbReference type="Pfam" id="PF01975">
    <property type="entry name" value="SurE"/>
    <property type="match status" value="1"/>
</dbReference>
<dbReference type="SUPFAM" id="SSF64167">
    <property type="entry name" value="SurE-like"/>
    <property type="match status" value="1"/>
</dbReference>
<name>SURE_NITMU</name>
<sequence>MRILLSNDDGYFAPGLACLAEALSVIADIVVVAPERDRSGASNSLTLDRPLSLRKSHNGFYYVNGTPTDCVHLAVTGMLDTLPDMVVSGINDGANMGDDTIYSGTVAAATEGFLLGVPSLAISLAGFSAGNFPTAARVAAEIVRRFETDKLHGPVLLNINVPDIPYDELQGLEVTRLGRRHKAEPVVKYKTPRGETVYWVGAAGPAQDAGEGTDFLAIQRKRVSVTPLQIDLTRYGQLDAVKEWLNSHALGSTRS</sequence>
<evidence type="ECO:0000255" key="1">
    <source>
        <dbReference type="HAMAP-Rule" id="MF_00060"/>
    </source>
</evidence>
<feature type="chain" id="PRO_0000235630" description="5'-nucleotidase SurE">
    <location>
        <begin position="1"/>
        <end position="255"/>
    </location>
</feature>
<feature type="binding site" evidence="1">
    <location>
        <position position="8"/>
    </location>
    <ligand>
        <name>a divalent metal cation</name>
        <dbReference type="ChEBI" id="CHEBI:60240"/>
    </ligand>
</feature>
<feature type="binding site" evidence="1">
    <location>
        <position position="9"/>
    </location>
    <ligand>
        <name>a divalent metal cation</name>
        <dbReference type="ChEBI" id="CHEBI:60240"/>
    </ligand>
</feature>
<feature type="binding site" evidence="1">
    <location>
        <position position="39"/>
    </location>
    <ligand>
        <name>a divalent metal cation</name>
        <dbReference type="ChEBI" id="CHEBI:60240"/>
    </ligand>
</feature>
<feature type="binding site" evidence="1">
    <location>
        <position position="91"/>
    </location>
    <ligand>
        <name>a divalent metal cation</name>
        <dbReference type="ChEBI" id="CHEBI:60240"/>
    </ligand>
</feature>
<keyword id="KW-0963">Cytoplasm</keyword>
<keyword id="KW-0378">Hydrolase</keyword>
<keyword id="KW-0479">Metal-binding</keyword>
<keyword id="KW-0547">Nucleotide-binding</keyword>
<keyword id="KW-1185">Reference proteome</keyword>
<accession>Q2YBR8</accession>
<protein>
    <recommendedName>
        <fullName evidence="1">5'-nucleotidase SurE</fullName>
        <ecNumber evidence="1">3.1.3.5</ecNumber>
    </recommendedName>
    <alternativeName>
        <fullName evidence="1">Nucleoside 5'-monophosphate phosphohydrolase</fullName>
    </alternativeName>
</protein>
<organism>
    <name type="scientific">Nitrosospira multiformis (strain ATCC 25196 / NCIMB 11849 / C 71)</name>
    <dbReference type="NCBI Taxonomy" id="323848"/>
    <lineage>
        <taxon>Bacteria</taxon>
        <taxon>Pseudomonadati</taxon>
        <taxon>Pseudomonadota</taxon>
        <taxon>Betaproteobacteria</taxon>
        <taxon>Nitrosomonadales</taxon>
        <taxon>Nitrosomonadaceae</taxon>
        <taxon>Nitrosospira</taxon>
    </lineage>
</organism>